<feature type="chain" id="PRO_1000212487" description="Phosphatidylserine decarboxylase beta chain" evidence="1">
    <location>
        <begin position="1"/>
        <end position="251"/>
    </location>
</feature>
<feature type="chain" id="PRO_1000212488" description="Phosphatidylserine decarboxylase alpha chain" evidence="1">
    <location>
        <begin position="252"/>
        <end position="286"/>
    </location>
</feature>
<feature type="active site" description="Charge relay system; for autoendoproteolytic cleavage activity" evidence="1">
    <location>
        <position position="90"/>
    </location>
</feature>
<feature type="active site" description="Charge relay system; for autoendoproteolytic cleavage activity" evidence="1">
    <location>
        <position position="147"/>
    </location>
</feature>
<feature type="active site" description="Charge relay system; for autoendoproteolytic cleavage activity" evidence="1">
    <location>
        <position position="252"/>
    </location>
</feature>
<feature type="active site" description="Schiff-base intermediate with substrate; via pyruvic acid; for decarboxylase activity" evidence="1">
    <location>
        <position position="252"/>
    </location>
</feature>
<feature type="site" description="Cleavage (non-hydrolytic); by autocatalysis" evidence="1">
    <location>
        <begin position="251"/>
        <end position="252"/>
    </location>
</feature>
<feature type="modified residue" description="Pyruvic acid (Ser); by autocatalysis" evidence="1">
    <location>
        <position position="252"/>
    </location>
</feature>
<sequence length="286" mass="31400">MKKQLFILSQYLLPHHLLSRLAGCIAECRVRWFKNAFTAWFAKRYQVDMSQALVEDLTAYEHFNAFFTRALKDGARPLDQTPGAVLSPADGAVSQLGPIEHGRVFQAKGHSFSVLELLGGDAALSAPFMGGDFATVYLSPKDYHRVHMPLAGTLREMVYIPGRIFSVNQTTAENVPELFARNERVACIFDTERGPMAVVLVGAMIVASIETVWAGLVTPPKRELKTFRYDEAARAPIHLEKGAELGRFKLGSTAIVLFGPDQVKWAEELVAGSPVQMGQGIAAPKA</sequence>
<gene>
    <name evidence="1" type="primary">psd</name>
    <name type="ordered locus">PFLU_0505</name>
</gene>
<reference key="1">
    <citation type="journal article" date="2009" name="Genome Biol.">
        <title>Genomic and genetic analyses of diversity and plant interactions of Pseudomonas fluorescens.</title>
        <authorList>
            <person name="Silby M.W."/>
            <person name="Cerdeno-Tarraga A.M."/>
            <person name="Vernikos G.S."/>
            <person name="Giddens S.R."/>
            <person name="Jackson R.W."/>
            <person name="Preston G.M."/>
            <person name="Zhang X.-X."/>
            <person name="Moon C.D."/>
            <person name="Gehrig S.M."/>
            <person name="Godfrey S.A.C."/>
            <person name="Knight C.G."/>
            <person name="Malone J.G."/>
            <person name="Robinson Z."/>
            <person name="Spiers A.J."/>
            <person name="Harris S."/>
            <person name="Challis G.L."/>
            <person name="Yaxley A.M."/>
            <person name="Harris D."/>
            <person name="Seeger K."/>
            <person name="Murphy L."/>
            <person name="Rutter S."/>
            <person name="Squares R."/>
            <person name="Quail M.A."/>
            <person name="Saunders E."/>
            <person name="Mavromatis K."/>
            <person name="Brettin T.S."/>
            <person name="Bentley S.D."/>
            <person name="Hothersall J."/>
            <person name="Stephens E."/>
            <person name="Thomas C.M."/>
            <person name="Parkhill J."/>
            <person name="Levy S.B."/>
            <person name="Rainey P.B."/>
            <person name="Thomson N.R."/>
        </authorList>
    </citation>
    <scope>NUCLEOTIDE SEQUENCE [LARGE SCALE GENOMIC DNA]</scope>
    <source>
        <strain>SBW25</strain>
    </source>
</reference>
<organism>
    <name type="scientific">Pseudomonas fluorescens (strain SBW25)</name>
    <dbReference type="NCBI Taxonomy" id="216595"/>
    <lineage>
        <taxon>Bacteria</taxon>
        <taxon>Pseudomonadati</taxon>
        <taxon>Pseudomonadota</taxon>
        <taxon>Gammaproteobacteria</taxon>
        <taxon>Pseudomonadales</taxon>
        <taxon>Pseudomonadaceae</taxon>
        <taxon>Pseudomonas</taxon>
    </lineage>
</organism>
<dbReference type="EC" id="4.1.1.65" evidence="1"/>
<dbReference type="EMBL" id="AM181176">
    <property type="protein sequence ID" value="CAY46780.1"/>
    <property type="molecule type" value="Genomic_DNA"/>
</dbReference>
<dbReference type="SMR" id="C3KDM6"/>
<dbReference type="STRING" id="294.SRM1_00560"/>
<dbReference type="PATRIC" id="fig|216595.4.peg.744"/>
<dbReference type="eggNOG" id="COG0688">
    <property type="taxonomic scope" value="Bacteria"/>
</dbReference>
<dbReference type="HOGENOM" id="CLU_029061_4_1_6"/>
<dbReference type="OrthoDB" id="9802030at2"/>
<dbReference type="UniPathway" id="UPA00558">
    <property type="reaction ID" value="UER00616"/>
</dbReference>
<dbReference type="GO" id="GO:0005886">
    <property type="term" value="C:plasma membrane"/>
    <property type="evidence" value="ECO:0007669"/>
    <property type="project" value="UniProtKB-SubCell"/>
</dbReference>
<dbReference type="GO" id="GO:0004609">
    <property type="term" value="F:phosphatidylserine decarboxylase activity"/>
    <property type="evidence" value="ECO:0007669"/>
    <property type="project" value="UniProtKB-UniRule"/>
</dbReference>
<dbReference type="GO" id="GO:0006646">
    <property type="term" value="P:phosphatidylethanolamine biosynthetic process"/>
    <property type="evidence" value="ECO:0007669"/>
    <property type="project" value="UniProtKB-UniRule"/>
</dbReference>
<dbReference type="HAMAP" id="MF_00662">
    <property type="entry name" value="PS_decarb_PSD_B_type1"/>
    <property type="match status" value="1"/>
</dbReference>
<dbReference type="InterPro" id="IPR003817">
    <property type="entry name" value="PS_Dcarbxylase"/>
</dbReference>
<dbReference type="InterPro" id="IPR033177">
    <property type="entry name" value="PSD-B"/>
</dbReference>
<dbReference type="InterPro" id="IPR033178">
    <property type="entry name" value="PSD_type1_pro"/>
</dbReference>
<dbReference type="NCBIfam" id="TIGR00163">
    <property type="entry name" value="PS_decarb"/>
    <property type="match status" value="1"/>
</dbReference>
<dbReference type="PANTHER" id="PTHR10067">
    <property type="entry name" value="PHOSPHATIDYLSERINE DECARBOXYLASE"/>
    <property type="match status" value="1"/>
</dbReference>
<dbReference type="PANTHER" id="PTHR10067:SF6">
    <property type="entry name" value="PHOSPHATIDYLSERINE DECARBOXYLASE PROENZYME, MITOCHONDRIAL"/>
    <property type="match status" value="1"/>
</dbReference>
<dbReference type="Pfam" id="PF02666">
    <property type="entry name" value="PS_Dcarbxylase"/>
    <property type="match status" value="1"/>
</dbReference>
<evidence type="ECO:0000255" key="1">
    <source>
        <dbReference type="HAMAP-Rule" id="MF_00662"/>
    </source>
</evidence>
<accession>C3KDM6</accession>
<name>PSD_PSEFS</name>
<proteinExistence type="inferred from homology"/>
<keyword id="KW-1003">Cell membrane</keyword>
<keyword id="KW-0210">Decarboxylase</keyword>
<keyword id="KW-0444">Lipid biosynthesis</keyword>
<keyword id="KW-0443">Lipid metabolism</keyword>
<keyword id="KW-0456">Lyase</keyword>
<keyword id="KW-0472">Membrane</keyword>
<keyword id="KW-0594">Phospholipid biosynthesis</keyword>
<keyword id="KW-1208">Phospholipid metabolism</keyword>
<keyword id="KW-0670">Pyruvate</keyword>
<keyword id="KW-0865">Zymogen</keyword>
<comment type="function">
    <text evidence="1">Catalyzes the formation of phosphatidylethanolamine (PtdEtn) from phosphatidylserine (PtdSer).</text>
</comment>
<comment type="catalytic activity">
    <reaction evidence="1">
        <text>a 1,2-diacyl-sn-glycero-3-phospho-L-serine + H(+) = a 1,2-diacyl-sn-glycero-3-phosphoethanolamine + CO2</text>
        <dbReference type="Rhea" id="RHEA:20828"/>
        <dbReference type="ChEBI" id="CHEBI:15378"/>
        <dbReference type="ChEBI" id="CHEBI:16526"/>
        <dbReference type="ChEBI" id="CHEBI:57262"/>
        <dbReference type="ChEBI" id="CHEBI:64612"/>
        <dbReference type="EC" id="4.1.1.65"/>
    </reaction>
</comment>
<comment type="cofactor">
    <cofactor evidence="1">
        <name>pyruvate</name>
        <dbReference type="ChEBI" id="CHEBI:15361"/>
    </cofactor>
    <text evidence="1">Binds 1 pyruvoyl group covalently per subunit.</text>
</comment>
<comment type="pathway">
    <text evidence="1">Phospholipid metabolism; phosphatidylethanolamine biosynthesis; phosphatidylethanolamine from CDP-diacylglycerol: step 2/2.</text>
</comment>
<comment type="subunit">
    <text evidence="1">Heterodimer of a large membrane-associated beta subunit and a small pyruvoyl-containing alpha subunit.</text>
</comment>
<comment type="subcellular location">
    <subcellularLocation>
        <location evidence="1">Cell membrane</location>
        <topology evidence="1">Peripheral membrane protein</topology>
    </subcellularLocation>
</comment>
<comment type="PTM">
    <text evidence="1">Is synthesized initially as an inactive proenzyme. Formation of the active enzyme involves a self-maturation process in which the active site pyruvoyl group is generated from an internal serine residue via an autocatalytic post-translational modification. Two non-identical subunits are generated from the proenzyme in this reaction, and the pyruvate is formed at the N-terminus of the alpha chain, which is derived from the carboxyl end of the proenzyme. The autoendoproteolytic cleavage occurs by a canonical serine protease mechanism, in which the side chain hydroxyl group of the serine supplies its oxygen atom to form the C-terminus of the beta chain, while the remainder of the serine residue undergoes an oxidative deamination to produce ammonia and the pyruvoyl prosthetic group on the alpha chain. During this reaction, the Ser that is part of the protease active site of the proenzyme becomes the pyruvoyl prosthetic group, which constitutes an essential element of the active site of the mature decarboxylase.</text>
</comment>
<comment type="similarity">
    <text evidence="1">Belongs to the phosphatidylserine decarboxylase family. PSD-B subfamily. Prokaryotic type I sub-subfamily.</text>
</comment>
<protein>
    <recommendedName>
        <fullName evidence="1">Phosphatidylserine decarboxylase proenzyme</fullName>
        <ecNumber evidence="1">4.1.1.65</ecNumber>
    </recommendedName>
    <component>
        <recommendedName>
            <fullName evidence="1">Phosphatidylserine decarboxylase alpha chain</fullName>
        </recommendedName>
    </component>
    <component>
        <recommendedName>
            <fullName evidence="1">Phosphatidylserine decarboxylase beta chain</fullName>
        </recommendedName>
    </component>
</protein>